<accession>C0RES0</accession>
<organism>
    <name type="scientific">Brucella melitensis biotype 2 (strain ATCC 23457)</name>
    <dbReference type="NCBI Taxonomy" id="546272"/>
    <lineage>
        <taxon>Bacteria</taxon>
        <taxon>Pseudomonadati</taxon>
        <taxon>Pseudomonadota</taxon>
        <taxon>Alphaproteobacteria</taxon>
        <taxon>Hyphomicrobiales</taxon>
        <taxon>Brucellaceae</taxon>
        <taxon>Brucella/Ochrobactrum group</taxon>
        <taxon>Brucella</taxon>
    </lineage>
</organism>
<gene>
    <name evidence="1" type="primary">glcB</name>
    <name type="ordered locus">BMEA_A1703</name>
</gene>
<keyword id="KW-0963">Cytoplasm</keyword>
<keyword id="KW-0329">Glyoxylate bypass</keyword>
<keyword id="KW-0460">Magnesium</keyword>
<keyword id="KW-0479">Metal-binding</keyword>
<keyword id="KW-0558">Oxidation</keyword>
<keyword id="KW-0808">Transferase</keyword>
<keyword id="KW-0816">Tricarboxylic acid cycle</keyword>
<protein>
    <recommendedName>
        <fullName evidence="1">Malate synthase G</fullName>
        <ecNumber evidence="1">2.3.3.9</ecNumber>
    </recommendedName>
</protein>
<reference key="1">
    <citation type="submission" date="2009-03" db="EMBL/GenBank/DDBJ databases">
        <title>Brucella melitensis ATCC 23457 whole genome shotgun sequencing project.</title>
        <authorList>
            <person name="Setubal J.C."/>
            <person name="Boyle S."/>
            <person name="Crasta O.R."/>
            <person name="Gillespie J.J."/>
            <person name="Kenyon R.W."/>
            <person name="Lu J."/>
            <person name="Mane S."/>
            <person name="Nagrani S."/>
            <person name="Shallom J.M."/>
            <person name="Shallom S."/>
            <person name="Shukla M."/>
            <person name="Snyder E.E."/>
            <person name="Sobral B.W."/>
            <person name="Wattam A.R."/>
            <person name="Will R."/>
            <person name="Williams K."/>
            <person name="Yoo H."/>
            <person name="Munk C."/>
            <person name="Tapia R."/>
            <person name="Han C."/>
            <person name="Detter J.C."/>
            <person name="Bruce D."/>
            <person name="Brettin T.S."/>
        </authorList>
    </citation>
    <scope>NUCLEOTIDE SEQUENCE [LARGE SCALE GENOMIC DNA]</scope>
    <source>
        <strain>ATCC 23457</strain>
    </source>
</reference>
<name>MASZ_BRUMB</name>
<comment type="function">
    <text evidence="1">Involved in the glycolate utilization. Catalyzes the condensation and subsequent hydrolysis of acetyl-coenzyme A (acetyl-CoA) and glyoxylate to form malate and CoA.</text>
</comment>
<comment type="catalytic activity">
    <reaction evidence="1">
        <text>glyoxylate + acetyl-CoA + H2O = (S)-malate + CoA + H(+)</text>
        <dbReference type="Rhea" id="RHEA:18181"/>
        <dbReference type="ChEBI" id="CHEBI:15377"/>
        <dbReference type="ChEBI" id="CHEBI:15378"/>
        <dbReference type="ChEBI" id="CHEBI:15589"/>
        <dbReference type="ChEBI" id="CHEBI:36655"/>
        <dbReference type="ChEBI" id="CHEBI:57287"/>
        <dbReference type="ChEBI" id="CHEBI:57288"/>
        <dbReference type="EC" id="2.3.3.9"/>
    </reaction>
</comment>
<comment type="cofactor">
    <cofactor evidence="1">
        <name>Mg(2+)</name>
        <dbReference type="ChEBI" id="CHEBI:18420"/>
    </cofactor>
</comment>
<comment type="pathway">
    <text evidence="1">Carbohydrate metabolism; glyoxylate cycle; (S)-malate from isocitrate: step 2/2.</text>
</comment>
<comment type="subunit">
    <text evidence="1">Monomer.</text>
</comment>
<comment type="subcellular location">
    <subcellularLocation>
        <location evidence="1">Cytoplasm</location>
    </subcellularLocation>
</comment>
<comment type="similarity">
    <text evidence="1">Belongs to the malate synthase family. GlcB subfamily.</text>
</comment>
<proteinExistence type="inferred from homology"/>
<feature type="chain" id="PRO_1000147424" description="Malate synthase G">
    <location>
        <begin position="1"/>
        <end position="728"/>
    </location>
</feature>
<feature type="active site" description="Proton acceptor" evidence="1">
    <location>
        <position position="345"/>
    </location>
</feature>
<feature type="active site" description="Proton donor" evidence="1">
    <location>
        <position position="636"/>
    </location>
</feature>
<feature type="binding site" evidence="1">
    <location>
        <position position="123"/>
    </location>
    <ligand>
        <name>acetyl-CoA</name>
        <dbReference type="ChEBI" id="CHEBI:57288"/>
    </ligand>
</feature>
<feature type="binding site" evidence="1">
    <location>
        <begin position="130"/>
        <end position="131"/>
    </location>
    <ligand>
        <name>acetyl-CoA</name>
        <dbReference type="ChEBI" id="CHEBI:57288"/>
    </ligand>
</feature>
<feature type="binding site" evidence="1">
    <location>
        <position position="281"/>
    </location>
    <ligand>
        <name>acetyl-CoA</name>
        <dbReference type="ChEBI" id="CHEBI:57288"/>
    </ligand>
</feature>
<feature type="binding site" evidence="1">
    <location>
        <position position="318"/>
    </location>
    <ligand>
        <name>acetyl-CoA</name>
        <dbReference type="ChEBI" id="CHEBI:57288"/>
    </ligand>
</feature>
<feature type="binding site" evidence="1">
    <location>
        <position position="345"/>
    </location>
    <ligand>
        <name>glyoxylate</name>
        <dbReference type="ChEBI" id="CHEBI:36655"/>
    </ligand>
</feature>
<feature type="binding site" evidence="1">
    <location>
        <position position="437"/>
    </location>
    <ligand>
        <name>glyoxylate</name>
        <dbReference type="ChEBI" id="CHEBI:36655"/>
    </ligand>
</feature>
<feature type="binding site" evidence="1">
    <location>
        <position position="437"/>
    </location>
    <ligand>
        <name>Mg(2+)</name>
        <dbReference type="ChEBI" id="CHEBI:18420"/>
    </ligand>
</feature>
<feature type="binding site" evidence="1">
    <location>
        <begin position="462"/>
        <end position="465"/>
    </location>
    <ligand>
        <name>glyoxylate</name>
        <dbReference type="ChEBI" id="CHEBI:36655"/>
    </ligand>
</feature>
<feature type="binding site" evidence="1">
    <location>
        <position position="465"/>
    </location>
    <ligand>
        <name>Mg(2+)</name>
        <dbReference type="ChEBI" id="CHEBI:18420"/>
    </ligand>
</feature>
<feature type="binding site" evidence="1">
    <location>
        <position position="546"/>
    </location>
    <ligand>
        <name>acetyl-CoA</name>
        <dbReference type="ChEBI" id="CHEBI:57288"/>
    </ligand>
</feature>
<feature type="modified residue" description="Cysteine sulfenic acid (-SOH)" evidence="1">
    <location>
        <position position="622"/>
    </location>
</feature>
<evidence type="ECO:0000255" key="1">
    <source>
        <dbReference type="HAMAP-Rule" id="MF_00641"/>
    </source>
</evidence>
<sequence>MGSAEKRNYVEIEGLAVAPELVEFLAKEAAPGTGVEPEKFWKGFAAIIRDLAPKNRALLAKRDELQARIDAWYKENRDKGYSQADYQQFLKDIGYLLPEGGAFSVSTTNVDPEITHIAGPQLVVPVMNARYALNAANARWGSLYDALYGTDAISEADGAEKGKGYNPKRGEKVIAWAKNFLDESAPLSTGKWADVAGLAVNDGKLEIRLTDGSATTLKDESQFKGYNGDAASPTNVLLAKHNMHVDIVINADHPIGKTDPAHIADVVLESAISTIQDCEDSIAAVDAEDKVAVYRNWLGLMNGKLEDTFEKNGKQMTRRLNGDRTYTAPDGSTLTLKGRSLMLVRNVGHLMTNPAILDAEGNEVPEGIMDAAFTSLIALHDIGPNGRHMNSREGSVYIVKPKMHGPEEVAFANEIFTRTEEMLGMKPNTLKIGIMDEERRTTVNLKEAIRAAKDRVVFINTGFLDRTGDEIHTSMEAGPMIRKGDMKQAAWIGAYEQWNVDIGLECGLSGHAQIGKGMWAMPDMMAAMLEQKIAHPKAGANTAWVPSPTAATLHATHYHKIDVAAVQEKLKSRPRAKLDDILSVPVAVRPNWTPDDIQHEIDNNAQGILGYVVRWIDQGVGCSKVPDINNVGLMEDRATLRISAQHIANWLYHGVVSEAQVMETMKRMAAIVDKQNEGDPLYRPMAADFDKSIAFQAACDLVFKGREQPNGYTEPVLHRRRLELKQAS</sequence>
<dbReference type="EC" id="2.3.3.9" evidence="1"/>
<dbReference type="EMBL" id="CP001488">
    <property type="protein sequence ID" value="ACO01392.1"/>
    <property type="molecule type" value="Genomic_DNA"/>
</dbReference>
<dbReference type="RefSeq" id="WP_004684123.1">
    <property type="nucleotide sequence ID" value="NC_012441.1"/>
</dbReference>
<dbReference type="SMR" id="C0RES0"/>
<dbReference type="KEGG" id="bmi:BMEA_A1703"/>
<dbReference type="HOGENOM" id="CLU_028446_1_0_5"/>
<dbReference type="UniPathway" id="UPA00703">
    <property type="reaction ID" value="UER00720"/>
</dbReference>
<dbReference type="Proteomes" id="UP000001748">
    <property type="component" value="Chromosome I"/>
</dbReference>
<dbReference type="GO" id="GO:0005829">
    <property type="term" value="C:cytosol"/>
    <property type="evidence" value="ECO:0007669"/>
    <property type="project" value="TreeGrafter"/>
</dbReference>
<dbReference type="GO" id="GO:0000287">
    <property type="term" value="F:magnesium ion binding"/>
    <property type="evidence" value="ECO:0007669"/>
    <property type="project" value="TreeGrafter"/>
</dbReference>
<dbReference type="GO" id="GO:0004474">
    <property type="term" value="F:malate synthase activity"/>
    <property type="evidence" value="ECO:0007669"/>
    <property type="project" value="UniProtKB-UniRule"/>
</dbReference>
<dbReference type="GO" id="GO:0009436">
    <property type="term" value="P:glyoxylate catabolic process"/>
    <property type="evidence" value="ECO:0007669"/>
    <property type="project" value="TreeGrafter"/>
</dbReference>
<dbReference type="GO" id="GO:0006097">
    <property type="term" value="P:glyoxylate cycle"/>
    <property type="evidence" value="ECO:0007669"/>
    <property type="project" value="UniProtKB-UniRule"/>
</dbReference>
<dbReference type="GO" id="GO:0006099">
    <property type="term" value="P:tricarboxylic acid cycle"/>
    <property type="evidence" value="ECO:0007669"/>
    <property type="project" value="UniProtKB-KW"/>
</dbReference>
<dbReference type="CDD" id="cd00728">
    <property type="entry name" value="malate_synt_G"/>
    <property type="match status" value="1"/>
</dbReference>
<dbReference type="FunFam" id="3.20.20.360:FF:000002">
    <property type="entry name" value="Malate synthase G"/>
    <property type="match status" value="1"/>
</dbReference>
<dbReference type="Gene3D" id="3.20.20.360">
    <property type="entry name" value="Malate synthase, domain 3"/>
    <property type="match status" value="2"/>
</dbReference>
<dbReference type="Gene3D" id="1.20.1220.12">
    <property type="entry name" value="Malate synthase, domain III"/>
    <property type="match status" value="1"/>
</dbReference>
<dbReference type="HAMAP" id="MF_00641">
    <property type="entry name" value="Malate_synth_G"/>
    <property type="match status" value="1"/>
</dbReference>
<dbReference type="InterPro" id="IPR044856">
    <property type="entry name" value="Malate_synth_C_sf"/>
</dbReference>
<dbReference type="InterPro" id="IPR011076">
    <property type="entry name" value="Malate_synth_sf"/>
</dbReference>
<dbReference type="InterPro" id="IPR001465">
    <property type="entry name" value="Malate_synthase_TIM"/>
</dbReference>
<dbReference type="InterPro" id="IPR006253">
    <property type="entry name" value="Malate_synthG"/>
</dbReference>
<dbReference type="InterPro" id="IPR048355">
    <property type="entry name" value="MS_C"/>
</dbReference>
<dbReference type="InterPro" id="IPR048356">
    <property type="entry name" value="MS_N"/>
</dbReference>
<dbReference type="InterPro" id="IPR046363">
    <property type="entry name" value="MS_N_TIM-barrel_dom"/>
</dbReference>
<dbReference type="InterPro" id="IPR048357">
    <property type="entry name" value="MSG_insertion"/>
</dbReference>
<dbReference type="NCBIfam" id="TIGR01345">
    <property type="entry name" value="malate_syn_G"/>
    <property type="match status" value="1"/>
</dbReference>
<dbReference type="NCBIfam" id="NF002825">
    <property type="entry name" value="PRK02999.1"/>
    <property type="match status" value="1"/>
</dbReference>
<dbReference type="PANTHER" id="PTHR42739">
    <property type="entry name" value="MALATE SYNTHASE G"/>
    <property type="match status" value="1"/>
</dbReference>
<dbReference type="PANTHER" id="PTHR42739:SF1">
    <property type="entry name" value="MALATE SYNTHASE G"/>
    <property type="match status" value="1"/>
</dbReference>
<dbReference type="Pfam" id="PF20659">
    <property type="entry name" value="MS_C"/>
    <property type="match status" value="1"/>
</dbReference>
<dbReference type="Pfam" id="PF20656">
    <property type="entry name" value="MS_N"/>
    <property type="match status" value="1"/>
</dbReference>
<dbReference type="Pfam" id="PF01274">
    <property type="entry name" value="MS_TIM-barrel"/>
    <property type="match status" value="1"/>
</dbReference>
<dbReference type="Pfam" id="PF20658">
    <property type="entry name" value="MSG_insertion"/>
    <property type="match status" value="1"/>
</dbReference>
<dbReference type="SUPFAM" id="SSF51645">
    <property type="entry name" value="Malate synthase G"/>
    <property type="match status" value="1"/>
</dbReference>